<keyword id="KW-0066">ATP synthesis</keyword>
<keyword id="KW-0997">Cell inner membrane</keyword>
<keyword id="KW-1003">Cell membrane</keyword>
<keyword id="KW-0139">CF(1)</keyword>
<keyword id="KW-0375">Hydrogen ion transport</keyword>
<keyword id="KW-0406">Ion transport</keyword>
<keyword id="KW-0472">Membrane</keyword>
<keyword id="KW-1185">Reference proteome</keyword>
<keyword id="KW-0813">Transport</keyword>
<feature type="chain" id="PRO_0000370871" description="ATP synthase subunit delta">
    <location>
        <begin position="1"/>
        <end position="176"/>
    </location>
</feature>
<organism>
    <name type="scientific">Actinobacillus succinogenes (strain ATCC 55618 / DSM 22257 / CCUG 43843 / 130Z)</name>
    <dbReference type="NCBI Taxonomy" id="339671"/>
    <lineage>
        <taxon>Bacteria</taxon>
        <taxon>Pseudomonadati</taxon>
        <taxon>Pseudomonadota</taxon>
        <taxon>Gammaproteobacteria</taxon>
        <taxon>Pasteurellales</taxon>
        <taxon>Pasteurellaceae</taxon>
        <taxon>Actinobacillus</taxon>
    </lineage>
</organism>
<evidence type="ECO:0000255" key="1">
    <source>
        <dbReference type="HAMAP-Rule" id="MF_01416"/>
    </source>
</evidence>
<protein>
    <recommendedName>
        <fullName evidence="1">ATP synthase subunit delta</fullName>
    </recommendedName>
    <alternativeName>
        <fullName evidence="1">ATP synthase F(1) sector subunit delta</fullName>
    </alternativeName>
    <alternativeName>
        <fullName evidence="1">F-type ATPase subunit delta</fullName>
        <shortName evidence="1">F-ATPase subunit delta</shortName>
    </alternativeName>
</protein>
<proteinExistence type="inferred from homology"/>
<reference key="1">
    <citation type="journal article" date="2010" name="BMC Genomics">
        <title>A genomic perspective on the potential of Actinobacillus succinogenes for industrial succinate production.</title>
        <authorList>
            <person name="McKinlay J.B."/>
            <person name="Laivenieks M."/>
            <person name="Schindler B.D."/>
            <person name="McKinlay A.A."/>
            <person name="Siddaramappa S."/>
            <person name="Challacombe J.F."/>
            <person name="Lowry S.R."/>
            <person name="Clum A."/>
            <person name="Lapidus A.L."/>
            <person name="Burkhart K.B."/>
            <person name="Harkins V."/>
            <person name="Vieille C."/>
        </authorList>
    </citation>
    <scope>NUCLEOTIDE SEQUENCE [LARGE SCALE GENOMIC DNA]</scope>
    <source>
        <strain>ATCC 55618 / DSM 22257 / CCUG 43843 / 130Z</strain>
    </source>
</reference>
<accession>A6VL60</accession>
<dbReference type="EMBL" id="CP000746">
    <property type="protein sequence ID" value="ABR73707.1"/>
    <property type="molecule type" value="Genomic_DNA"/>
</dbReference>
<dbReference type="RefSeq" id="WP_011978982.1">
    <property type="nucleotide sequence ID" value="NC_009655.1"/>
</dbReference>
<dbReference type="SMR" id="A6VL60"/>
<dbReference type="STRING" id="339671.Asuc_0329"/>
<dbReference type="KEGG" id="asu:Asuc_0329"/>
<dbReference type="eggNOG" id="COG0712">
    <property type="taxonomic scope" value="Bacteria"/>
</dbReference>
<dbReference type="HOGENOM" id="CLU_085114_3_0_6"/>
<dbReference type="OrthoDB" id="9816221at2"/>
<dbReference type="Proteomes" id="UP000001114">
    <property type="component" value="Chromosome"/>
</dbReference>
<dbReference type="GO" id="GO:0005886">
    <property type="term" value="C:plasma membrane"/>
    <property type="evidence" value="ECO:0007669"/>
    <property type="project" value="UniProtKB-SubCell"/>
</dbReference>
<dbReference type="GO" id="GO:0045259">
    <property type="term" value="C:proton-transporting ATP synthase complex"/>
    <property type="evidence" value="ECO:0007669"/>
    <property type="project" value="UniProtKB-KW"/>
</dbReference>
<dbReference type="GO" id="GO:0046933">
    <property type="term" value="F:proton-transporting ATP synthase activity, rotational mechanism"/>
    <property type="evidence" value="ECO:0007669"/>
    <property type="project" value="UniProtKB-UniRule"/>
</dbReference>
<dbReference type="Gene3D" id="1.10.520.20">
    <property type="entry name" value="N-terminal domain of the delta subunit of the F1F0-ATP synthase"/>
    <property type="match status" value="1"/>
</dbReference>
<dbReference type="HAMAP" id="MF_01416">
    <property type="entry name" value="ATP_synth_delta_bact"/>
    <property type="match status" value="1"/>
</dbReference>
<dbReference type="InterPro" id="IPR026015">
    <property type="entry name" value="ATP_synth_OSCP/delta_N_sf"/>
</dbReference>
<dbReference type="InterPro" id="IPR000711">
    <property type="entry name" value="ATPase_OSCP/dsu"/>
</dbReference>
<dbReference type="NCBIfam" id="TIGR01145">
    <property type="entry name" value="ATP_synt_delta"/>
    <property type="match status" value="1"/>
</dbReference>
<dbReference type="NCBIfam" id="NF004402">
    <property type="entry name" value="PRK05758.2-2"/>
    <property type="match status" value="1"/>
</dbReference>
<dbReference type="NCBIfam" id="NF004404">
    <property type="entry name" value="PRK05758.2-5"/>
    <property type="match status" value="1"/>
</dbReference>
<dbReference type="PANTHER" id="PTHR11910">
    <property type="entry name" value="ATP SYNTHASE DELTA CHAIN"/>
    <property type="match status" value="1"/>
</dbReference>
<dbReference type="Pfam" id="PF00213">
    <property type="entry name" value="OSCP"/>
    <property type="match status" value="1"/>
</dbReference>
<dbReference type="PRINTS" id="PR00125">
    <property type="entry name" value="ATPASEDELTA"/>
</dbReference>
<dbReference type="SUPFAM" id="SSF47928">
    <property type="entry name" value="N-terminal domain of the delta subunit of the F1F0-ATP synthase"/>
    <property type="match status" value="1"/>
</dbReference>
<comment type="function">
    <text evidence="1">F(1)F(0) ATP synthase produces ATP from ADP in the presence of a proton or sodium gradient. F-type ATPases consist of two structural domains, F(1) containing the extramembraneous catalytic core and F(0) containing the membrane proton channel, linked together by a central stalk and a peripheral stalk. During catalysis, ATP synthesis in the catalytic domain of F(1) is coupled via a rotary mechanism of the central stalk subunits to proton translocation.</text>
</comment>
<comment type="function">
    <text evidence="1">This protein is part of the stalk that links CF(0) to CF(1). It either transmits conformational changes from CF(0) to CF(1) or is implicated in proton conduction.</text>
</comment>
<comment type="subunit">
    <text evidence="1">F-type ATPases have 2 components, F(1) - the catalytic core - and F(0) - the membrane proton channel. F(1) has five subunits: alpha(3), beta(3), gamma(1), delta(1), epsilon(1). F(0) has three main subunits: a(1), b(2) and c(10-14). The alpha and beta chains form an alternating ring which encloses part of the gamma chain. F(1) is attached to F(0) by a central stalk formed by the gamma and epsilon chains, while a peripheral stalk is formed by the delta and b chains.</text>
</comment>
<comment type="subcellular location">
    <subcellularLocation>
        <location evidence="1">Cell inner membrane</location>
        <topology evidence="1">Peripheral membrane protein</topology>
    </subcellularLocation>
</comment>
<comment type="similarity">
    <text evidence="1">Belongs to the ATPase delta chain family.</text>
</comment>
<name>ATPD_ACTSZ</name>
<sequence>MSELTTIARPYAKAAFDFAVEQSAVEKWHEMLAFIAEVAKDEQIQQFLTSSLSPEKVADTVISICGEHLDKSGQNLIRLMAENKRLTVLPAVFNEFRHYMEEYNAIAEVQVISAQPLNATQTDKIAAAMEKRLARKVKLNCSVDNTLIAGVIIRTDDFVIDGSSRGQLNRLANELQ</sequence>
<gene>
    <name evidence="1" type="primary">atpH</name>
    <name type="ordered locus">Asuc_0329</name>
</gene>